<gene>
    <name evidence="1" type="primary">pqqE</name>
    <name type="ordered locus">Mnod_5988</name>
</gene>
<proteinExistence type="inferred from homology"/>
<feature type="chain" id="PRO_1000147578" description="PqqA peptide cyclase">
    <location>
        <begin position="1"/>
        <end position="379"/>
    </location>
</feature>
<feature type="domain" description="Radical SAM core" evidence="2">
    <location>
        <begin position="8"/>
        <end position="220"/>
    </location>
</feature>
<feature type="binding site" evidence="1">
    <location>
        <position position="22"/>
    </location>
    <ligand>
        <name>[4Fe-4S] cluster</name>
        <dbReference type="ChEBI" id="CHEBI:49883"/>
        <note>4Fe-4S-S-AdoMet</note>
    </ligand>
</feature>
<feature type="binding site" evidence="1">
    <location>
        <position position="26"/>
    </location>
    <ligand>
        <name>[4Fe-4S] cluster</name>
        <dbReference type="ChEBI" id="CHEBI:49883"/>
        <note>4Fe-4S-S-AdoMet</note>
    </ligand>
</feature>
<feature type="binding site" evidence="1">
    <location>
        <position position="29"/>
    </location>
    <ligand>
        <name>[4Fe-4S] cluster</name>
        <dbReference type="ChEBI" id="CHEBI:49883"/>
        <note>4Fe-4S-S-AdoMet</note>
    </ligand>
</feature>
<organism>
    <name type="scientific">Methylobacterium nodulans (strain LMG 21967 / CNCM I-2342 / ORS 2060)</name>
    <dbReference type="NCBI Taxonomy" id="460265"/>
    <lineage>
        <taxon>Bacteria</taxon>
        <taxon>Pseudomonadati</taxon>
        <taxon>Pseudomonadota</taxon>
        <taxon>Alphaproteobacteria</taxon>
        <taxon>Hyphomicrobiales</taxon>
        <taxon>Methylobacteriaceae</taxon>
        <taxon>Methylobacterium</taxon>
    </lineage>
</organism>
<keyword id="KW-0004">4Fe-4S</keyword>
<keyword id="KW-0408">Iron</keyword>
<keyword id="KW-0411">Iron-sulfur</keyword>
<keyword id="KW-0479">Metal-binding</keyword>
<keyword id="KW-0560">Oxidoreductase</keyword>
<keyword id="KW-0884">PQQ biosynthesis</keyword>
<keyword id="KW-1185">Reference proteome</keyword>
<keyword id="KW-0949">S-adenosyl-L-methionine</keyword>
<name>PQQE_METNO</name>
<evidence type="ECO:0000255" key="1">
    <source>
        <dbReference type="HAMAP-Rule" id="MF_00660"/>
    </source>
</evidence>
<evidence type="ECO:0000255" key="2">
    <source>
        <dbReference type="PROSITE-ProRule" id="PRU01266"/>
    </source>
</evidence>
<sequence>MNAVTPTLPAPIGLLAELTHRCPLRCPYCSNPLELDKRSAELDTATWQRVLAEAAALGVLHIHLSGGEPTARQDIVEITRTCADLGLYSNLITSGVGAALGKLEALYDAGLDHVQLSFQSAEAGNAERIGGLKNAQAQKFAFAERVVALGLPLTLNAVIHRGNIDEVPTLIDLAVTLGAKRLEVAHTQYYGWAYVNRAALMPAKADVDRSIRVVEEARERLKGRLVIDLVVPDYYAKYPKACAGGWGRRLMNVTPAGKVLPCHAAETIPGLEFWNVQDHALADIWAHSPAFQAYRGTSWMKEPCRSCDRREKDWGGCRCQALALAGDAAATDPACSLSPLHAKIQALAIAESALEIAPDYQYRTIGGAPAVPQPEGASA</sequence>
<reference key="1">
    <citation type="submission" date="2009-01" db="EMBL/GenBank/DDBJ databases">
        <title>Complete sequence of chromosome of Methylobacterium nodulans ORS 2060.</title>
        <authorList>
            <consortium name="US DOE Joint Genome Institute"/>
            <person name="Lucas S."/>
            <person name="Copeland A."/>
            <person name="Lapidus A."/>
            <person name="Glavina del Rio T."/>
            <person name="Dalin E."/>
            <person name="Tice H."/>
            <person name="Bruce D."/>
            <person name="Goodwin L."/>
            <person name="Pitluck S."/>
            <person name="Sims D."/>
            <person name="Brettin T."/>
            <person name="Detter J.C."/>
            <person name="Han C."/>
            <person name="Larimer F."/>
            <person name="Land M."/>
            <person name="Hauser L."/>
            <person name="Kyrpides N."/>
            <person name="Ivanova N."/>
            <person name="Marx C.J."/>
            <person name="Richardson P."/>
        </authorList>
    </citation>
    <scope>NUCLEOTIDE SEQUENCE [LARGE SCALE GENOMIC DNA]</scope>
    <source>
        <strain>LMG 21967 / CNCM I-2342 / ORS 2060</strain>
    </source>
</reference>
<dbReference type="EC" id="1.21.98.4" evidence="1"/>
<dbReference type="EMBL" id="CP001349">
    <property type="protein sequence ID" value="ACL60815.1"/>
    <property type="molecule type" value="Genomic_DNA"/>
</dbReference>
<dbReference type="RefSeq" id="WP_015932409.1">
    <property type="nucleotide sequence ID" value="NC_011894.1"/>
</dbReference>
<dbReference type="SMR" id="B8ITV7"/>
<dbReference type="STRING" id="460265.Mnod_5988"/>
<dbReference type="KEGG" id="mno:Mnod_5988"/>
<dbReference type="eggNOG" id="COG0535">
    <property type="taxonomic scope" value="Bacteria"/>
</dbReference>
<dbReference type="HOGENOM" id="CLU_009273_4_7_5"/>
<dbReference type="OrthoDB" id="9792276at2"/>
<dbReference type="UniPathway" id="UPA00539"/>
<dbReference type="Proteomes" id="UP000008207">
    <property type="component" value="Chromosome"/>
</dbReference>
<dbReference type="GO" id="GO:0051539">
    <property type="term" value="F:4 iron, 4 sulfur cluster binding"/>
    <property type="evidence" value="ECO:0007669"/>
    <property type="project" value="UniProtKB-KW"/>
</dbReference>
<dbReference type="GO" id="GO:0009975">
    <property type="term" value="F:cyclase activity"/>
    <property type="evidence" value="ECO:0007669"/>
    <property type="project" value="UniProtKB-UniRule"/>
</dbReference>
<dbReference type="GO" id="GO:0005506">
    <property type="term" value="F:iron ion binding"/>
    <property type="evidence" value="ECO:0007669"/>
    <property type="project" value="UniProtKB-UniRule"/>
</dbReference>
<dbReference type="GO" id="GO:0016491">
    <property type="term" value="F:oxidoreductase activity"/>
    <property type="evidence" value="ECO:0007669"/>
    <property type="project" value="UniProtKB-KW"/>
</dbReference>
<dbReference type="GO" id="GO:1904047">
    <property type="term" value="F:S-adenosyl-L-methionine binding"/>
    <property type="evidence" value="ECO:0007669"/>
    <property type="project" value="UniProtKB-UniRule"/>
</dbReference>
<dbReference type="GO" id="GO:0018189">
    <property type="term" value="P:pyrroloquinoline quinone biosynthetic process"/>
    <property type="evidence" value="ECO:0007669"/>
    <property type="project" value="UniProtKB-UniRule"/>
</dbReference>
<dbReference type="CDD" id="cd01335">
    <property type="entry name" value="Radical_SAM"/>
    <property type="match status" value="1"/>
</dbReference>
<dbReference type="CDD" id="cd21119">
    <property type="entry name" value="SPASM_PqqE"/>
    <property type="match status" value="1"/>
</dbReference>
<dbReference type="Gene3D" id="3.20.20.70">
    <property type="entry name" value="Aldolase class I"/>
    <property type="match status" value="1"/>
</dbReference>
<dbReference type="HAMAP" id="MF_00660">
    <property type="entry name" value="PqqE"/>
    <property type="match status" value="1"/>
</dbReference>
<dbReference type="InterPro" id="IPR023885">
    <property type="entry name" value="4Fe4S-binding_SPASM_dom"/>
</dbReference>
<dbReference type="InterPro" id="IPR013785">
    <property type="entry name" value="Aldolase_TIM"/>
</dbReference>
<dbReference type="InterPro" id="IPR000385">
    <property type="entry name" value="MoaA_NifB_PqqE_Fe-S-bd_CS"/>
</dbReference>
<dbReference type="InterPro" id="IPR011843">
    <property type="entry name" value="PQQ_synth_PqqE_bac"/>
</dbReference>
<dbReference type="InterPro" id="IPR017200">
    <property type="entry name" value="PqqE-like"/>
</dbReference>
<dbReference type="InterPro" id="IPR050377">
    <property type="entry name" value="Radical_SAM_PqqE_MftC-like"/>
</dbReference>
<dbReference type="InterPro" id="IPR007197">
    <property type="entry name" value="rSAM"/>
</dbReference>
<dbReference type="NCBIfam" id="TIGR02109">
    <property type="entry name" value="PQQ_syn_pqqE"/>
    <property type="match status" value="1"/>
</dbReference>
<dbReference type="NCBIfam" id="TIGR04085">
    <property type="entry name" value="rSAM_more_4Fe4S"/>
    <property type="match status" value="1"/>
</dbReference>
<dbReference type="PANTHER" id="PTHR11228:SF7">
    <property type="entry name" value="PQQA PEPTIDE CYCLASE"/>
    <property type="match status" value="1"/>
</dbReference>
<dbReference type="PANTHER" id="PTHR11228">
    <property type="entry name" value="RADICAL SAM DOMAIN PROTEIN"/>
    <property type="match status" value="1"/>
</dbReference>
<dbReference type="Pfam" id="PF04055">
    <property type="entry name" value="Radical_SAM"/>
    <property type="match status" value="1"/>
</dbReference>
<dbReference type="Pfam" id="PF13186">
    <property type="entry name" value="SPASM"/>
    <property type="match status" value="1"/>
</dbReference>
<dbReference type="PIRSF" id="PIRSF037420">
    <property type="entry name" value="PQQ_syn_pqqE"/>
    <property type="match status" value="1"/>
</dbReference>
<dbReference type="SFLD" id="SFLDF00280">
    <property type="entry name" value="coenzyme_PQQ_synthesis_protein"/>
    <property type="match status" value="1"/>
</dbReference>
<dbReference type="SFLD" id="SFLDG01386">
    <property type="entry name" value="main_SPASM_domain-containing"/>
    <property type="match status" value="1"/>
</dbReference>
<dbReference type="SUPFAM" id="SSF102114">
    <property type="entry name" value="Radical SAM enzymes"/>
    <property type="match status" value="1"/>
</dbReference>
<dbReference type="PROSITE" id="PS01305">
    <property type="entry name" value="MOAA_NIFB_PQQE"/>
    <property type="match status" value="1"/>
</dbReference>
<dbReference type="PROSITE" id="PS51918">
    <property type="entry name" value="RADICAL_SAM"/>
    <property type="match status" value="1"/>
</dbReference>
<accession>B8ITV7</accession>
<comment type="function">
    <text evidence="1">Catalyzes the cross-linking of a glutamate residue and a tyrosine residue in the PqqA protein as part of the biosynthesis of pyrroloquinoline quinone (PQQ).</text>
</comment>
<comment type="catalytic activity">
    <reaction evidence="1">
        <text>[PQQ precursor protein] + S-adenosyl-L-methionine = E-Y cross-linked-[PQQ precursor protein] + 5'-deoxyadenosine + L-methionine + H(+)</text>
        <dbReference type="Rhea" id="RHEA:56836"/>
        <dbReference type="Rhea" id="RHEA-COMP:14800"/>
        <dbReference type="Rhea" id="RHEA-COMP:14801"/>
        <dbReference type="ChEBI" id="CHEBI:15378"/>
        <dbReference type="ChEBI" id="CHEBI:17319"/>
        <dbReference type="ChEBI" id="CHEBI:57844"/>
        <dbReference type="ChEBI" id="CHEBI:59789"/>
        <dbReference type="ChEBI" id="CHEBI:141026"/>
        <dbReference type="ChEBI" id="CHEBI:141027"/>
        <dbReference type="EC" id="1.21.98.4"/>
    </reaction>
</comment>
<comment type="cofactor">
    <cofactor evidence="1">
        <name>[4Fe-4S] cluster</name>
        <dbReference type="ChEBI" id="CHEBI:49883"/>
    </cofactor>
    <text evidence="1">Binds 1 [4Fe-4S] cluster. The cluster is coordinated with 3 cysteines and an exchangeable S-adenosyl-L-methionine.</text>
</comment>
<comment type="pathway">
    <text evidence="1">Cofactor biosynthesis; pyrroloquinoline quinone biosynthesis.</text>
</comment>
<comment type="subunit">
    <text evidence="1">Interacts with PqqD. The interaction is necessary for activity of PqqE.</text>
</comment>
<comment type="similarity">
    <text evidence="1">Belongs to the radical SAM superfamily. PqqE family.</text>
</comment>
<protein>
    <recommendedName>
        <fullName evidence="1">PqqA peptide cyclase</fullName>
        <ecNumber evidence="1">1.21.98.4</ecNumber>
    </recommendedName>
    <alternativeName>
        <fullName evidence="1">Coenzyme PQQ synthesis protein E</fullName>
    </alternativeName>
    <alternativeName>
        <fullName evidence="1">Pyrroloquinoline quinone biosynthesis protein E</fullName>
    </alternativeName>
</protein>